<sequence>MSLPSPLLPVAELAMQNAQQSGYLEHWPQALITQFQFISGLSKFVVETVQRDAQLAEGLPEMLAQESRQEAYRTRLAEQLQACHDEVAGHRVLRQFRNREMVYIAWKDFTQAWSLEASLSHLSELAEAMIFETYQWQYQLCCQEWGTPTNAQGEAQPMLIIGMGKLGGGELNFSSDIDLIFTYPENGETQGARRSIANAQFFTRLGQRLIKALDQQTFDGFCYRVDMRLRPFGESGPLVMSYAALEDYYQEQGRDWERYAMIKARVMGREMYPEYQELRQMLRPFVFRRYIDFSAIQSLRRMKSMISSEVRRRGLSNNIKLGAGGIREIEFIAQVFQLIRGGREPALRQRGLLVTLEAIKQLQLLEEAQVCHLVEAYKYLRRLENLLQAMADKQTQTLPDNELEQLALAVAMGYSQWQALQNDVQQHMAKVHAVFVTLIGDEEDEVSPVERHFNELWDMAHNPEVIEQILQNDLACQNAATMSEQIIQFKADLAKKTLGPRGREVLNRLMPKLFSAIFADADAQFGLPRVLHLLHNIATRTTYLELLDEHPAALTQLVRLCTASPMISEQLARYPILLDELIDPQQLYNPIALDAYRTELRDFLARIPEDDVEQQMDALRQFKQICSLRIAAADIAGVLPVMKVSDHLTYLAEAIVEAVVHQAWQQVAEKYGEPTHLKDREGKGFAVVGYGKVGGWELGYNSDLDVVFLHDCPVNVYTDGKKEIDGRQFYLRLAQRIIHIFSTRTASGILYEVDTRLRPSGASGLLVCPVDAFEEYQHNDAWTWEHQALVRARMIYGDEHLASEFHRVRHQVLAKPREQAKLQKEVADMRAKMRDHLGGKKSDRFMLKQDQGGITDIEFLAQYLVLNYSAEKPKLTRWCDNVRIFETLIAQGVMEEAQAMLLTQAYTTMRDEIHRRNLLNLDADVALDKFVALRQGVSKAWQEWLESSTI</sequence>
<proteinExistence type="inferred from homology"/>
<feature type="chain" id="PRO_0000209284" description="Bifunctional glutamine synthetase adenylyltransferase/adenylyl-removing enzyme">
    <location>
        <begin position="1"/>
        <end position="950"/>
    </location>
</feature>
<feature type="region of interest" description="Adenylyl removase" evidence="1">
    <location>
        <begin position="1"/>
        <end position="443"/>
    </location>
</feature>
<feature type="region of interest" description="Adenylyl transferase" evidence="1">
    <location>
        <begin position="450"/>
        <end position="950"/>
    </location>
</feature>
<protein>
    <recommendedName>
        <fullName evidence="1">Bifunctional glutamine synthetase adenylyltransferase/adenylyl-removing enzyme</fullName>
    </recommendedName>
    <alternativeName>
        <fullName evidence="1">ATP:glutamine synthetase adenylyltransferase</fullName>
    </alternativeName>
    <alternativeName>
        <fullName evidence="1">ATase</fullName>
    </alternativeName>
    <domain>
        <recommendedName>
            <fullName evidence="1">Glutamine synthetase adenylyl-L-tyrosine phosphorylase</fullName>
            <ecNumber evidence="1">2.7.7.89</ecNumber>
        </recommendedName>
        <alternativeName>
            <fullName evidence="1">Adenylyl removase</fullName>
            <shortName evidence="1">AR</shortName>
            <shortName evidence="1">AT-N</shortName>
        </alternativeName>
    </domain>
    <domain>
        <recommendedName>
            <fullName evidence="1">Glutamine synthetase adenylyl transferase</fullName>
            <ecNumber evidence="1">2.7.7.42</ecNumber>
        </recommendedName>
        <alternativeName>
            <fullName evidence="1">Adenylyl transferase</fullName>
            <shortName evidence="1">AT</shortName>
            <shortName evidence="1">AT-C</shortName>
        </alternativeName>
    </domain>
</protein>
<comment type="function">
    <text evidence="1">Involved in the regulation of glutamine synthetase GlnA, a key enzyme in the process to assimilate ammonia. When cellular nitrogen levels are high, the C-terminal adenylyl transferase (AT) inactivates GlnA by covalent transfer of an adenylyl group from ATP to specific tyrosine residue of GlnA, thus reducing its activity. Conversely, when nitrogen levels are low, the N-terminal adenylyl removase (AR) activates GlnA by removing the adenylyl group by phosphorolysis, increasing its activity. The regulatory region of GlnE binds the signal transduction protein PII (GlnB) which indicates the nitrogen status of the cell.</text>
</comment>
<comment type="catalytic activity">
    <reaction evidence="1">
        <text>[glutamine synthetase]-O(4)-(5'-adenylyl)-L-tyrosine + phosphate = [glutamine synthetase]-L-tyrosine + ADP</text>
        <dbReference type="Rhea" id="RHEA:43716"/>
        <dbReference type="Rhea" id="RHEA-COMP:10660"/>
        <dbReference type="Rhea" id="RHEA-COMP:10661"/>
        <dbReference type="ChEBI" id="CHEBI:43474"/>
        <dbReference type="ChEBI" id="CHEBI:46858"/>
        <dbReference type="ChEBI" id="CHEBI:83624"/>
        <dbReference type="ChEBI" id="CHEBI:456216"/>
        <dbReference type="EC" id="2.7.7.89"/>
    </reaction>
</comment>
<comment type="catalytic activity">
    <reaction evidence="1">
        <text>[glutamine synthetase]-L-tyrosine + ATP = [glutamine synthetase]-O(4)-(5'-adenylyl)-L-tyrosine + diphosphate</text>
        <dbReference type="Rhea" id="RHEA:18589"/>
        <dbReference type="Rhea" id="RHEA-COMP:10660"/>
        <dbReference type="Rhea" id="RHEA-COMP:10661"/>
        <dbReference type="ChEBI" id="CHEBI:30616"/>
        <dbReference type="ChEBI" id="CHEBI:33019"/>
        <dbReference type="ChEBI" id="CHEBI:46858"/>
        <dbReference type="ChEBI" id="CHEBI:83624"/>
        <dbReference type="EC" id="2.7.7.42"/>
    </reaction>
</comment>
<comment type="cofactor">
    <cofactor evidence="1">
        <name>Mg(2+)</name>
        <dbReference type="ChEBI" id="CHEBI:18420"/>
    </cofactor>
</comment>
<comment type="similarity">
    <text evidence="1">Belongs to the GlnE family.</text>
</comment>
<evidence type="ECO:0000255" key="1">
    <source>
        <dbReference type="HAMAP-Rule" id="MF_00802"/>
    </source>
</evidence>
<name>GLNE_VIBVY</name>
<gene>
    <name evidence="1" type="primary">glnE</name>
    <name type="ordered locus">VV0581</name>
</gene>
<dbReference type="EC" id="2.7.7.89" evidence="1"/>
<dbReference type="EC" id="2.7.7.42" evidence="1"/>
<dbReference type="EMBL" id="BA000037">
    <property type="protein sequence ID" value="BAC93345.1"/>
    <property type="molecule type" value="Genomic_DNA"/>
</dbReference>
<dbReference type="RefSeq" id="WP_011149486.1">
    <property type="nucleotide sequence ID" value="NC_005139.1"/>
</dbReference>
<dbReference type="SMR" id="Q7MNY4"/>
<dbReference type="STRING" id="672.VV93_v1c05210"/>
<dbReference type="KEGG" id="vvy:VV0581"/>
<dbReference type="PATRIC" id="fig|196600.6.peg.600"/>
<dbReference type="eggNOG" id="COG1391">
    <property type="taxonomic scope" value="Bacteria"/>
</dbReference>
<dbReference type="HOGENOM" id="CLU_006233_0_1_6"/>
<dbReference type="Proteomes" id="UP000002675">
    <property type="component" value="Chromosome I"/>
</dbReference>
<dbReference type="GO" id="GO:0005829">
    <property type="term" value="C:cytosol"/>
    <property type="evidence" value="ECO:0007669"/>
    <property type="project" value="TreeGrafter"/>
</dbReference>
<dbReference type="GO" id="GO:0008882">
    <property type="term" value="F:[glutamate-ammonia-ligase] adenylyltransferase activity"/>
    <property type="evidence" value="ECO:0007669"/>
    <property type="project" value="UniProtKB-UniRule"/>
</dbReference>
<dbReference type="GO" id="GO:0047388">
    <property type="term" value="F:[glutamine synthetase]-adenylyl-L-tyrosine phosphorylase activity"/>
    <property type="evidence" value="ECO:0007669"/>
    <property type="project" value="UniProtKB-EC"/>
</dbReference>
<dbReference type="GO" id="GO:0005524">
    <property type="term" value="F:ATP binding"/>
    <property type="evidence" value="ECO:0007669"/>
    <property type="project" value="UniProtKB-UniRule"/>
</dbReference>
<dbReference type="GO" id="GO:0000287">
    <property type="term" value="F:magnesium ion binding"/>
    <property type="evidence" value="ECO:0007669"/>
    <property type="project" value="UniProtKB-UniRule"/>
</dbReference>
<dbReference type="GO" id="GO:0000820">
    <property type="term" value="P:regulation of glutamine family amino acid metabolic process"/>
    <property type="evidence" value="ECO:0007669"/>
    <property type="project" value="UniProtKB-UniRule"/>
</dbReference>
<dbReference type="CDD" id="cd05401">
    <property type="entry name" value="NT_GlnE_GlnD_like"/>
    <property type="match status" value="2"/>
</dbReference>
<dbReference type="FunFam" id="1.20.120.1510:FF:000001">
    <property type="entry name" value="Bifunctional glutamine synthetase adenylyltransferase/adenylyl-removing enzyme"/>
    <property type="match status" value="1"/>
</dbReference>
<dbReference type="FunFam" id="1.20.120.330:FF:000005">
    <property type="entry name" value="Bifunctional glutamine synthetase adenylyltransferase/adenylyl-removing enzyme"/>
    <property type="match status" value="1"/>
</dbReference>
<dbReference type="FunFam" id="1.20.120.330:FF:000008">
    <property type="entry name" value="Bifunctional glutamine synthetase adenylyltransferase/adenylyl-removing enzyme"/>
    <property type="match status" value="1"/>
</dbReference>
<dbReference type="FunFam" id="3.30.460.10:FF:000009">
    <property type="entry name" value="Bifunctional glutamine synthetase adenylyltransferase/adenylyl-removing enzyme"/>
    <property type="match status" value="1"/>
</dbReference>
<dbReference type="FunFam" id="3.30.460.10:FF:000014">
    <property type="entry name" value="Bifunctional glutamine synthetase adenylyltransferase/adenylyl-removing enzyme"/>
    <property type="match status" value="1"/>
</dbReference>
<dbReference type="Gene3D" id="1.20.120.1510">
    <property type="match status" value="1"/>
</dbReference>
<dbReference type="Gene3D" id="3.30.460.10">
    <property type="entry name" value="Beta Polymerase, domain 2"/>
    <property type="match status" value="2"/>
</dbReference>
<dbReference type="Gene3D" id="1.10.4050.10">
    <property type="entry name" value="Glutamine synthase adenylyltransferase GlnE"/>
    <property type="match status" value="1"/>
</dbReference>
<dbReference type="Gene3D" id="1.20.120.330">
    <property type="entry name" value="Nucleotidyltransferases domain 2"/>
    <property type="match status" value="2"/>
</dbReference>
<dbReference type="HAMAP" id="MF_00802">
    <property type="entry name" value="GlnE"/>
    <property type="match status" value="1"/>
</dbReference>
<dbReference type="InterPro" id="IPR023057">
    <property type="entry name" value="GlnE"/>
</dbReference>
<dbReference type="InterPro" id="IPR005190">
    <property type="entry name" value="GlnE_rpt_dom"/>
</dbReference>
<dbReference type="InterPro" id="IPR043519">
    <property type="entry name" value="NT_sf"/>
</dbReference>
<dbReference type="InterPro" id="IPR013546">
    <property type="entry name" value="PII_UdlTrfase/GS_AdlTrfase"/>
</dbReference>
<dbReference type="NCBIfam" id="NF008292">
    <property type="entry name" value="PRK11072.1"/>
    <property type="match status" value="1"/>
</dbReference>
<dbReference type="PANTHER" id="PTHR30621:SF0">
    <property type="entry name" value="BIFUNCTIONAL GLUTAMINE SYNTHETASE ADENYLYLTRANSFERASE_ADENYLYL-REMOVING ENZYME"/>
    <property type="match status" value="1"/>
</dbReference>
<dbReference type="PANTHER" id="PTHR30621">
    <property type="entry name" value="GLUTAMINE SYNTHETASE ADENYLYLTRANSFERASE"/>
    <property type="match status" value="1"/>
</dbReference>
<dbReference type="Pfam" id="PF08335">
    <property type="entry name" value="GlnD_UR_UTase"/>
    <property type="match status" value="2"/>
</dbReference>
<dbReference type="Pfam" id="PF03710">
    <property type="entry name" value="GlnE"/>
    <property type="match status" value="2"/>
</dbReference>
<dbReference type="SUPFAM" id="SSF81301">
    <property type="entry name" value="Nucleotidyltransferase"/>
    <property type="match status" value="2"/>
</dbReference>
<dbReference type="SUPFAM" id="SSF81593">
    <property type="entry name" value="Nucleotidyltransferase substrate binding subunit/domain"/>
    <property type="match status" value="2"/>
</dbReference>
<reference key="1">
    <citation type="journal article" date="2003" name="Genome Res.">
        <title>Comparative genome analysis of Vibrio vulnificus, a marine pathogen.</title>
        <authorList>
            <person name="Chen C.-Y."/>
            <person name="Wu K.-M."/>
            <person name="Chang Y.-C."/>
            <person name="Chang C.-H."/>
            <person name="Tsai H.-C."/>
            <person name="Liao T.-L."/>
            <person name="Liu Y.-M."/>
            <person name="Chen H.-J."/>
            <person name="Shen A.B.-T."/>
            <person name="Li J.-C."/>
            <person name="Su T.-L."/>
            <person name="Shao C.-P."/>
            <person name="Lee C.-T."/>
            <person name="Hor L.-I."/>
            <person name="Tsai S.-F."/>
        </authorList>
    </citation>
    <scope>NUCLEOTIDE SEQUENCE [LARGE SCALE GENOMIC DNA]</scope>
    <source>
        <strain>YJ016</strain>
    </source>
</reference>
<keyword id="KW-0067">ATP-binding</keyword>
<keyword id="KW-0460">Magnesium</keyword>
<keyword id="KW-0511">Multifunctional enzyme</keyword>
<keyword id="KW-0547">Nucleotide-binding</keyword>
<keyword id="KW-0548">Nucleotidyltransferase</keyword>
<keyword id="KW-0808">Transferase</keyword>
<organism>
    <name type="scientific">Vibrio vulnificus (strain YJ016)</name>
    <dbReference type="NCBI Taxonomy" id="196600"/>
    <lineage>
        <taxon>Bacteria</taxon>
        <taxon>Pseudomonadati</taxon>
        <taxon>Pseudomonadota</taxon>
        <taxon>Gammaproteobacteria</taxon>
        <taxon>Vibrionales</taxon>
        <taxon>Vibrionaceae</taxon>
        <taxon>Vibrio</taxon>
    </lineage>
</organism>
<accession>Q7MNY4</accession>